<reference key="1">
    <citation type="journal article" date="1997" name="Eur. J. Biochem.">
        <title>PCTAIRE 2, a Cdc2-related serine/threonine kinase, is predominantly expressed in terminally differentiated neurons.</title>
        <authorList>
            <person name="Hirose T."/>
            <person name="Tamaru T."/>
            <person name="Okumura N."/>
            <person name="Nagai K."/>
            <person name="Okada M."/>
        </authorList>
    </citation>
    <scope>NUCLEOTIDE SEQUENCE [MRNA]</scope>
</reference>
<reference key="2">
    <citation type="journal article" date="2000" name="Eur. J. Biochem.">
        <title>Identification of tudor repeat associator with PCTAIRE 2 (Trap). A novel protein that interacts with the N-terminal domain of PCTAIRE 2 in rat brain.</title>
        <authorList>
            <person name="Hirose T."/>
            <person name="Kawabuchi M."/>
            <person name="Tamaru T."/>
            <person name="Okumura N."/>
            <person name="Nagai K."/>
            <person name="Okada M."/>
        </authorList>
    </citation>
    <scope>IDENTIFICATION IN A COMPLEX WITH CDK16 AND TDRD7</scope>
    <scope>INTERACTION WITH TDRD7</scope>
</reference>
<reference key="3">
    <citation type="journal article" date="2006" name="Proc. Natl. Acad. Sci. U.S.A.">
        <title>Quantitative phosphoproteomics of vasopressin-sensitive renal cells: regulation of aquaporin-2 phosphorylation at two sites.</title>
        <authorList>
            <person name="Hoffert J.D."/>
            <person name="Pisitkun T."/>
            <person name="Wang G."/>
            <person name="Shen R.-F."/>
            <person name="Knepper M.A."/>
        </authorList>
    </citation>
    <scope>PHOSPHORYLATION [LARGE SCALE ANALYSIS] AT SER-137</scope>
    <scope>IDENTIFICATION BY MASS SPECTROMETRY [LARGE SCALE ANALYSIS]</scope>
</reference>
<reference key="4">
    <citation type="journal article" date="2012" name="Nat. Commun.">
        <title>Quantitative maps of protein phosphorylation sites across 14 different rat organs and tissues.</title>
        <authorList>
            <person name="Lundby A."/>
            <person name="Secher A."/>
            <person name="Lage K."/>
            <person name="Nordsborg N.B."/>
            <person name="Dmytriyev A."/>
            <person name="Lundby C."/>
            <person name="Olsen J.V."/>
        </authorList>
    </citation>
    <scope>PHOSPHORYLATION [LARGE SCALE ANALYSIS] AT SER-137 AND SER-180</scope>
    <scope>IDENTIFICATION BY MASS SPECTROMETRY [LARGE SCALE ANALYSIS]</scope>
</reference>
<dbReference type="EC" id="2.7.11.22"/>
<dbReference type="EMBL" id="AB005540">
    <property type="protein sequence ID" value="BAA22332.1"/>
    <property type="molecule type" value="mRNA"/>
</dbReference>
<dbReference type="SMR" id="O35831"/>
<dbReference type="FunCoup" id="O35831">
    <property type="interactions" value="3381"/>
</dbReference>
<dbReference type="STRING" id="10116.ENSRNOP00000005762"/>
<dbReference type="iPTMnet" id="O35831"/>
<dbReference type="PhosphoSitePlus" id="O35831"/>
<dbReference type="jPOST" id="O35831"/>
<dbReference type="PaxDb" id="10116-ENSRNOP00000005762"/>
<dbReference type="Ensembl" id="ENSRNOT00000109496.1">
    <property type="protein sequence ID" value="ENSRNOP00000085940.1"/>
    <property type="gene ID" value="ENSRNOG00000004148.6"/>
</dbReference>
<dbReference type="UCSC" id="RGD:1565593">
    <property type="organism name" value="rat"/>
</dbReference>
<dbReference type="AGR" id="RGD:1565593"/>
<dbReference type="RGD" id="1565593">
    <property type="gene designation" value="Cdk17"/>
</dbReference>
<dbReference type="eggNOG" id="KOG0594">
    <property type="taxonomic scope" value="Eukaryota"/>
</dbReference>
<dbReference type="GeneTree" id="ENSGT00940000155834"/>
<dbReference type="InParanoid" id="O35831"/>
<dbReference type="PhylomeDB" id="O35831"/>
<dbReference type="BRENDA" id="2.7.11.22">
    <property type="organism ID" value="5301"/>
</dbReference>
<dbReference type="PRO" id="PR:O35831"/>
<dbReference type="Proteomes" id="UP000002494">
    <property type="component" value="Chromosome 7"/>
</dbReference>
<dbReference type="GO" id="GO:0005737">
    <property type="term" value="C:cytoplasm"/>
    <property type="evidence" value="ECO:0000318"/>
    <property type="project" value="GO_Central"/>
</dbReference>
<dbReference type="GO" id="GO:0005634">
    <property type="term" value="C:nucleus"/>
    <property type="evidence" value="ECO:0000318"/>
    <property type="project" value="GO_Central"/>
</dbReference>
<dbReference type="GO" id="GO:0005524">
    <property type="term" value="F:ATP binding"/>
    <property type="evidence" value="ECO:0007669"/>
    <property type="project" value="UniProtKB-KW"/>
</dbReference>
<dbReference type="GO" id="GO:0004693">
    <property type="term" value="F:cyclin-dependent protein serine/threonine kinase activity"/>
    <property type="evidence" value="ECO:0000318"/>
    <property type="project" value="GO_Central"/>
</dbReference>
<dbReference type="GO" id="GO:0106310">
    <property type="term" value="F:protein serine kinase activity"/>
    <property type="evidence" value="ECO:0007669"/>
    <property type="project" value="RHEA"/>
</dbReference>
<dbReference type="GO" id="GO:1901987">
    <property type="term" value="P:regulation of cell cycle phase transition"/>
    <property type="evidence" value="ECO:0000318"/>
    <property type="project" value="GO_Central"/>
</dbReference>
<dbReference type="CDD" id="cd07872">
    <property type="entry name" value="STKc_PCTAIRE2"/>
    <property type="match status" value="1"/>
</dbReference>
<dbReference type="FunFam" id="3.30.200.20:FF:000007">
    <property type="entry name" value="Cyclin-dependent kinase 14, putative"/>
    <property type="match status" value="1"/>
</dbReference>
<dbReference type="FunFam" id="1.10.510.10:FF:000061">
    <property type="entry name" value="Putative cyclin-dependent kinase 17"/>
    <property type="match status" value="1"/>
</dbReference>
<dbReference type="Gene3D" id="3.30.200.20">
    <property type="entry name" value="Phosphorylase Kinase, domain 1"/>
    <property type="match status" value="1"/>
</dbReference>
<dbReference type="Gene3D" id="1.10.510.10">
    <property type="entry name" value="Transferase(Phosphotransferase) domain 1"/>
    <property type="match status" value="1"/>
</dbReference>
<dbReference type="InterPro" id="IPR050108">
    <property type="entry name" value="CDK"/>
</dbReference>
<dbReference type="InterPro" id="IPR011009">
    <property type="entry name" value="Kinase-like_dom_sf"/>
</dbReference>
<dbReference type="InterPro" id="IPR000719">
    <property type="entry name" value="Prot_kinase_dom"/>
</dbReference>
<dbReference type="InterPro" id="IPR017441">
    <property type="entry name" value="Protein_kinase_ATP_BS"/>
</dbReference>
<dbReference type="InterPro" id="IPR008271">
    <property type="entry name" value="Ser/Thr_kinase_AS"/>
</dbReference>
<dbReference type="PANTHER" id="PTHR24056">
    <property type="entry name" value="CELL DIVISION PROTEIN KINASE"/>
    <property type="match status" value="1"/>
</dbReference>
<dbReference type="PANTHER" id="PTHR24056:SF128">
    <property type="entry name" value="CYCLIN-DEPENDENT KINASE 17"/>
    <property type="match status" value="1"/>
</dbReference>
<dbReference type="Pfam" id="PF00069">
    <property type="entry name" value="Pkinase"/>
    <property type="match status" value="1"/>
</dbReference>
<dbReference type="SMART" id="SM00220">
    <property type="entry name" value="S_TKc"/>
    <property type="match status" value="1"/>
</dbReference>
<dbReference type="SUPFAM" id="SSF56112">
    <property type="entry name" value="Protein kinase-like (PK-like)"/>
    <property type="match status" value="1"/>
</dbReference>
<dbReference type="PROSITE" id="PS00107">
    <property type="entry name" value="PROTEIN_KINASE_ATP"/>
    <property type="match status" value="1"/>
</dbReference>
<dbReference type="PROSITE" id="PS50011">
    <property type="entry name" value="PROTEIN_KINASE_DOM"/>
    <property type="match status" value="1"/>
</dbReference>
<dbReference type="PROSITE" id="PS00108">
    <property type="entry name" value="PROTEIN_KINASE_ST"/>
    <property type="match status" value="1"/>
</dbReference>
<organism>
    <name type="scientific">Rattus norvegicus</name>
    <name type="common">Rat</name>
    <dbReference type="NCBI Taxonomy" id="10116"/>
    <lineage>
        <taxon>Eukaryota</taxon>
        <taxon>Metazoa</taxon>
        <taxon>Chordata</taxon>
        <taxon>Craniata</taxon>
        <taxon>Vertebrata</taxon>
        <taxon>Euteleostomi</taxon>
        <taxon>Mammalia</taxon>
        <taxon>Eutheria</taxon>
        <taxon>Euarchontoglires</taxon>
        <taxon>Glires</taxon>
        <taxon>Rodentia</taxon>
        <taxon>Myomorpha</taxon>
        <taxon>Muroidea</taxon>
        <taxon>Muridae</taxon>
        <taxon>Murinae</taxon>
        <taxon>Rattus</taxon>
    </lineage>
</organism>
<accession>O35831</accession>
<comment type="function">
    <text>May play a role in terminally differentiated neurons. Has a Ser/Thr-phosphorylating activity for histone H1.</text>
</comment>
<comment type="catalytic activity">
    <reaction>
        <text>L-seryl-[protein] + ATP = O-phospho-L-seryl-[protein] + ADP + H(+)</text>
        <dbReference type="Rhea" id="RHEA:17989"/>
        <dbReference type="Rhea" id="RHEA-COMP:9863"/>
        <dbReference type="Rhea" id="RHEA-COMP:11604"/>
        <dbReference type="ChEBI" id="CHEBI:15378"/>
        <dbReference type="ChEBI" id="CHEBI:29999"/>
        <dbReference type="ChEBI" id="CHEBI:30616"/>
        <dbReference type="ChEBI" id="CHEBI:83421"/>
        <dbReference type="ChEBI" id="CHEBI:456216"/>
        <dbReference type="EC" id="2.7.11.22"/>
    </reaction>
</comment>
<comment type="catalytic activity">
    <reaction>
        <text>L-threonyl-[protein] + ATP = O-phospho-L-threonyl-[protein] + ADP + H(+)</text>
        <dbReference type="Rhea" id="RHEA:46608"/>
        <dbReference type="Rhea" id="RHEA-COMP:11060"/>
        <dbReference type="Rhea" id="RHEA-COMP:11605"/>
        <dbReference type="ChEBI" id="CHEBI:15378"/>
        <dbReference type="ChEBI" id="CHEBI:30013"/>
        <dbReference type="ChEBI" id="CHEBI:30616"/>
        <dbReference type="ChEBI" id="CHEBI:61977"/>
        <dbReference type="ChEBI" id="CHEBI:456216"/>
        <dbReference type="EC" id="2.7.11.22"/>
    </reaction>
</comment>
<comment type="subunit">
    <text evidence="5">Found in a complex containing CABLES1, CDK16 and TDRD7. Interacts with TDRD7.</text>
</comment>
<comment type="tissue specificity">
    <text>Brain specific. Within the brain it is concentrated in the neuronal layers of the hippocampus and olfactory bulb, which mostly consist of post-mitotic neurons.</text>
</comment>
<comment type="similarity">
    <text evidence="6">Belongs to the protein kinase superfamily. CMGC Ser/Thr protein kinase family. CDC2/CDKX subfamily.</text>
</comment>
<name>CDK17_RAT</name>
<keyword id="KW-0067">ATP-binding</keyword>
<keyword id="KW-0418">Kinase</keyword>
<keyword id="KW-0547">Nucleotide-binding</keyword>
<keyword id="KW-0597">Phosphoprotein</keyword>
<keyword id="KW-1185">Reference proteome</keyword>
<keyword id="KW-0723">Serine/threonine-protein kinase</keyword>
<keyword id="KW-0808">Transferase</keyword>
<proteinExistence type="evidence at protein level"/>
<evidence type="ECO:0000250" key="1">
    <source>
        <dbReference type="UniProtKB" id="Q00537"/>
    </source>
</evidence>
<evidence type="ECO:0000255" key="2">
    <source>
        <dbReference type="PROSITE-ProRule" id="PRU00159"/>
    </source>
</evidence>
<evidence type="ECO:0000255" key="3">
    <source>
        <dbReference type="PROSITE-ProRule" id="PRU10027"/>
    </source>
</evidence>
<evidence type="ECO:0000256" key="4">
    <source>
        <dbReference type="SAM" id="MobiDB-lite"/>
    </source>
</evidence>
<evidence type="ECO:0000269" key="5">
    <source>
    </source>
</evidence>
<evidence type="ECO:0000305" key="6"/>
<evidence type="ECO:0007744" key="7">
    <source>
    </source>
</evidence>
<evidence type="ECO:0007744" key="8">
    <source>
    </source>
</evidence>
<feature type="chain" id="PRO_0000086489" description="Cyclin-dependent kinase 17">
    <location>
        <begin position="1"/>
        <end position="523"/>
    </location>
</feature>
<feature type="domain" description="Protein kinase" evidence="2">
    <location>
        <begin position="192"/>
        <end position="473"/>
    </location>
</feature>
<feature type="region of interest" description="Disordered" evidence="4">
    <location>
        <begin position="31"/>
        <end position="55"/>
    </location>
</feature>
<feature type="region of interest" description="Disordered" evidence="4">
    <location>
        <begin position="103"/>
        <end position="123"/>
    </location>
</feature>
<feature type="compositionally biased region" description="Polar residues" evidence="4">
    <location>
        <begin position="110"/>
        <end position="123"/>
    </location>
</feature>
<feature type="active site" description="Proton acceptor" evidence="2 3">
    <location>
        <position position="313"/>
    </location>
</feature>
<feature type="binding site" evidence="2">
    <location>
        <begin position="198"/>
        <end position="206"/>
    </location>
    <ligand>
        <name>ATP</name>
        <dbReference type="ChEBI" id="CHEBI:30616"/>
    </ligand>
</feature>
<feature type="binding site" evidence="2">
    <location>
        <position position="221"/>
    </location>
    <ligand>
        <name>ATP</name>
        <dbReference type="ChEBI" id="CHEBI:30616"/>
    </ligand>
</feature>
<feature type="modified residue" description="Phosphoserine" evidence="1">
    <location>
        <position position="9"/>
    </location>
</feature>
<feature type="modified residue" description="Phosphoserine" evidence="1">
    <location>
        <position position="80"/>
    </location>
</feature>
<feature type="modified residue" description="Phosphoserine" evidence="1">
    <location>
        <position position="92"/>
    </location>
</feature>
<feature type="modified residue" description="Phosphoserine" evidence="1">
    <location>
        <position position="105"/>
    </location>
</feature>
<feature type="modified residue" description="Phosphoserine" evidence="7 8">
    <location>
        <position position="137"/>
    </location>
</feature>
<feature type="modified residue" description="Phosphoserine" evidence="1">
    <location>
        <position position="146"/>
    </location>
</feature>
<feature type="modified residue" description="Phosphoserine" evidence="1">
    <location>
        <position position="165"/>
    </location>
</feature>
<feature type="modified residue" description="Phosphoserine" evidence="8">
    <location>
        <position position="180"/>
    </location>
</feature>
<protein>
    <recommendedName>
        <fullName>Cyclin-dependent kinase 17</fullName>
        <ecNumber>2.7.11.22</ecNumber>
    </recommendedName>
    <alternativeName>
        <fullName>Cell division protein kinase 17</fullName>
    </alternativeName>
    <alternativeName>
        <fullName>PCTAIRE-motif protein kinase 2</fullName>
    </alternativeName>
    <alternativeName>
        <fullName>Serine/threonine-protein kinase PCTAIRE-2</fullName>
    </alternativeName>
</protein>
<sequence length="523" mass="59432">MKKFKRRLSLTLRGSQTIDESLSELAEQMTIEESSSKDNEPIVKNGRPPTSHSMHSFLHQYTGSFKKPPLRRPHSVIGGSLGSFMAMPRNGSRLDIVHENLKMGSDGESDQASGTSSDEVQSPTGVCLRNRIHRRISMEDLNKRLSLPADIRIPDGYLEKLQISSPPFDQPMSRRSRRASLSEIGFGKMETYIKLEKLGEGTYATVYKGRSKLTENLVALKEIRLEHEEGAPCTAIREVSLLKDLKHANIVTLHDIVHTDKSLTLVFEYLDKDLKQYMDDCGSIMSMHNVKLFLYQILRGLAYCHRRKVLHRDLKPQNLLINERGELKLADFGLARAKSVPTKTYSNEVVTLWYRPPDVLLGSSEYSTQIDMWGVGCIFFEMASGRPLFPGSTVEDELHLIFRLLGTPSQETWPGVSSNDEFKNYNFPKYKPQPLINHAPRLDSEGIELITKFLQYESKKRAPAEEAMKHVYFRSLGPRIHALPESVSIFSLKEIQLQKDPGFRNSSYPETGVFVINHFTCRS</sequence>
<gene>
    <name type="primary">Cdk17</name>
    <name type="synonym">Pctaire2</name>
    <name type="synonym">Pctk2</name>
</gene>